<evidence type="ECO:0000250" key="1">
    <source>
        <dbReference type="UniProtKB" id="Q9CX63"/>
    </source>
</evidence>
<evidence type="ECO:0000255" key="2"/>
<evidence type="ECO:0000269" key="3">
    <source>
    </source>
</evidence>
<evidence type="ECO:0000269" key="4">
    <source>
    </source>
</evidence>
<evidence type="ECO:0000269" key="5">
    <source>
    </source>
</evidence>
<evidence type="ECO:0000303" key="6">
    <source>
    </source>
</evidence>
<evidence type="ECO:0000305" key="7"/>
<evidence type="ECO:0000312" key="8">
    <source>
        <dbReference type="HGNC" id="HGNC:34490"/>
    </source>
</evidence>
<feature type="signal peptide" evidence="4">
    <location>
        <begin position="1"/>
        <end position="20"/>
    </location>
</feature>
<feature type="chain" id="PRO_0000272654" description="Protein IL-40">
    <location>
        <begin position="21"/>
        <end position="265"/>
    </location>
</feature>
<feature type="glycosylation site" description="N-linked (GlcNAc...) asparagine" evidence="2">
    <location>
        <position position="86"/>
    </location>
</feature>
<feature type="glycosylation site" description="N-linked (GlcNAc...) asparagine" evidence="2">
    <location>
        <position position="132"/>
    </location>
</feature>
<feature type="sequence variant" id="VAR_067466" description="In dbSNP:rs4071641." evidence="3">
    <original>W</original>
    <variation>R</variation>
    <location>
        <position position="101"/>
    </location>
</feature>
<gene>
    <name evidence="8" type="primary">C17orf99</name>
    <name evidence="6" type="synonym">IL40</name>
    <name type="ORF">UNQ464/PRO809</name>
</gene>
<sequence length="265" mass="29091">MGLPGLFCLAVLAASSFSKAREEEITPVVSIAYKVLEVFPKGRWVLITCCAPQPPPPITYSLCGTKNIKVAKKVVKTHEPASFNLNVTLKSSPDLLTYFCWASSTSGAHVDSARLQMHWELWSKPVSELRANFTLQDRGAGPRVEMICQASSGSPPITNSLIGKDGQVHLQQRPCHRQPANFSFLPSQTSDWFWCQAANNANVQHSALTVVPPGGDQKMEDWQGPLESPILALPLYRSTRRLSEEEFGGFRIGNGEVRGRKAAAM</sequence>
<keyword id="KW-1064">Adaptive immunity</keyword>
<keyword id="KW-0202">Cytokine</keyword>
<keyword id="KW-0903">Direct protein sequencing</keyword>
<keyword id="KW-0325">Glycoprotein</keyword>
<keyword id="KW-0391">Immunity</keyword>
<keyword id="KW-1185">Reference proteome</keyword>
<keyword id="KW-0964">Secreted</keyword>
<keyword id="KW-0732">Signal</keyword>
<reference key="1">
    <citation type="journal article" date="2003" name="Genome Res.">
        <title>The secreted protein discovery initiative (SPDI), a large-scale effort to identify novel human secreted and transmembrane proteins: a bioinformatics assessment.</title>
        <authorList>
            <person name="Clark H.F."/>
            <person name="Gurney A.L."/>
            <person name="Abaya E."/>
            <person name="Baker K."/>
            <person name="Baldwin D.T."/>
            <person name="Brush J."/>
            <person name="Chen J."/>
            <person name="Chow B."/>
            <person name="Chui C."/>
            <person name="Crowley C."/>
            <person name="Currell B."/>
            <person name="Deuel B."/>
            <person name="Dowd P."/>
            <person name="Eaton D."/>
            <person name="Foster J.S."/>
            <person name="Grimaldi C."/>
            <person name="Gu Q."/>
            <person name="Hass P.E."/>
            <person name="Heldens S."/>
            <person name="Huang A."/>
            <person name="Kim H.S."/>
            <person name="Klimowski L."/>
            <person name="Jin Y."/>
            <person name="Johnson S."/>
            <person name="Lee J."/>
            <person name="Lewis L."/>
            <person name="Liao D."/>
            <person name="Mark M.R."/>
            <person name="Robbie E."/>
            <person name="Sanchez C."/>
            <person name="Schoenfeld J."/>
            <person name="Seshagiri S."/>
            <person name="Simmons L."/>
            <person name="Singh J."/>
            <person name="Smith V."/>
            <person name="Stinson J."/>
            <person name="Vagts A."/>
            <person name="Vandlen R.L."/>
            <person name="Watanabe C."/>
            <person name="Wieand D."/>
            <person name="Woods K."/>
            <person name="Xie M.-H."/>
            <person name="Yansura D.G."/>
            <person name="Yi S."/>
            <person name="Yu G."/>
            <person name="Yuan J."/>
            <person name="Zhang M."/>
            <person name="Zhang Z."/>
            <person name="Goddard A.D."/>
            <person name="Wood W.I."/>
            <person name="Godowski P.J."/>
            <person name="Gray A.M."/>
        </authorList>
    </citation>
    <scope>NUCLEOTIDE SEQUENCE [LARGE SCALE MRNA]</scope>
    <scope>VARIANT ARG-101</scope>
</reference>
<reference key="2">
    <citation type="journal article" date="2006" name="Nature">
        <title>DNA sequence of human chromosome 17 and analysis of rearrangement in the human lineage.</title>
        <authorList>
            <person name="Zody M.C."/>
            <person name="Garber M."/>
            <person name="Adams D.J."/>
            <person name="Sharpe T."/>
            <person name="Harrow J."/>
            <person name="Lupski J.R."/>
            <person name="Nicholson C."/>
            <person name="Searle S.M."/>
            <person name="Wilming L."/>
            <person name="Young S.K."/>
            <person name="Abouelleil A."/>
            <person name="Allen N.R."/>
            <person name="Bi W."/>
            <person name="Bloom T."/>
            <person name="Borowsky M.L."/>
            <person name="Bugalter B.E."/>
            <person name="Butler J."/>
            <person name="Chang J.L."/>
            <person name="Chen C.-K."/>
            <person name="Cook A."/>
            <person name="Corum B."/>
            <person name="Cuomo C.A."/>
            <person name="de Jong P.J."/>
            <person name="DeCaprio D."/>
            <person name="Dewar K."/>
            <person name="FitzGerald M."/>
            <person name="Gilbert J."/>
            <person name="Gibson R."/>
            <person name="Gnerre S."/>
            <person name="Goldstein S."/>
            <person name="Grafham D.V."/>
            <person name="Grocock R."/>
            <person name="Hafez N."/>
            <person name="Hagopian D.S."/>
            <person name="Hart E."/>
            <person name="Norman C.H."/>
            <person name="Humphray S."/>
            <person name="Jaffe D.B."/>
            <person name="Jones M."/>
            <person name="Kamal M."/>
            <person name="Khodiyar V.K."/>
            <person name="LaButti K."/>
            <person name="Laird G."/>
            <person name="Lehoczky J."/>
            <person name="Liu X."/>
            <person name="Lokyitsang T."/>
            <person name="Loveland J."/>
            <person name="Lui A."/>
            <person name="Macdonald P."/>
            <person name="Major J.E."/>
            <person name="Matthews L."/>
            <person name="Mauceli E."/>
            <person name="McCarroll S.A."/>
            <person name="Mihalev A.H."/>
            <person name="Mudge J."/>
            <person name="Nguyen C."/>
            <person name="Nicol R."/>
            <person name="O'Leary S.B."/>
            <person name="Osoegawa K."/>
            <person name="Schwartz D.C."/>
            <person name="Shaw-Smith C."/>
            <person name="Stankiewicz P."/>
            <person name="Steward C."/>
            <person name="Swarbreck D."/>
            <person name="Venkataraman V."/>
            <person name="Whittaker C.A."/>
            <person name="Yang X."/>
            <person name="Zimmer A.R."/>
            <person name="Bradley A."/>
            <person name="Hubbard T."/>
            <person name="Birren B.W."/>
            <person name="Rogers J."/>
            <person name="Lander E.S."/>
            <person name="Nusbaum C."/>
        </authorList>
    </citation>
    <scope>NUCLEOTIDE SEQUENCE [LARGE SCALE GENOMIC DNA]</scope>
</reference>
<reference key="3">
    <citation type="journal article" date="2004" name="Protein Sci.">
        <title>Signal peptide prediction based on analysis of experimentally verified cleavage sites.</title>
        <authorList>
            <person name="Zhang Z."/>
            <person name="Henzel W.J."/>
        </authorList>
    </citation>
    <scope>PROTEIN SEQUENCE OF 21-35</scope>
</reference>
<reference key="4">
    <citation type="journal article" date="2017" name="J. Immunol.">
        <title>Identification of IL-40, a novel B cell-associated cytokine.</title>
        <authorList>
            <person name="Catalan-Dibene J."/>
            <person name="Vazquez M.I."/>
            <person name="Luu V.P."/>
            <person name="Nuccio S.P."/>
            <person name="Karimzadeh A."/>
            <person name="Kastenschmidt J.M."/>
            <person name="Villalta S.A."/>
            <person name="Ushach I."/>
            <person name="Pone E.J."/>
            <person name="Casali P."/>
            <person name="Raffatellu M."/>
            <person name="Burkhardt A.M."/>
            <person name="Hernandez-Ruiz M."/>
            <person name="Heller G."/>
            <person name="Hevezi P.A."/>
            <person name="Zlotnik A."/>
        </authorList>
    </citation>
    <scope>SUBCELLULAR LOCATION</scope>
    <scope>TISSUE SPECIFICITY</scope>
</reference>
<protein>
    <recommendedName>
        <fullName evidence="7">Protein IL-40</fullName>
    </recommendedName>
    <alternativeName>
        <fullName evidence="6">Interleukin-40</fullName>
        <shortName evidence="6">IL-40</shortName>
    </alternativeName>
</protein>
<dbReference type="EMBL" id="AY358510">
    <property type="protein sequence ID" value="AAQ88874.1"/>
    <property type="molecule type" value="mRNA"/>
</dbReference>
<dbReference type="EMBL" id="AC021593">
    <property type="status" value="NOT_ANNOTATED_CDS"/>
    <property type="molecule type" value="Genomic_DNA"/>
</dbReference>
<dbReference type="CCDS" id="CCDS54171.1"/>
<dbReference type="RefSeq" id="NP_001156547.1">
    <property type="nucleotide sequence ID" value="NM_001163075.2"/>
</dbReference>
<dbReference type="BioGRID" id="936687">
    <property type="interactions" value="1"/>
</dbReference>
<dbReference type="FunCoup" id="Q6UX52">
    <property type="interactions" value="118"/>
</dbReference>
<dbReference type="GlyCosmos" id="Q6UX52">
    <property type="glycosylation" value="2 sites, No reported glycans"/>
</dbReference>
<dbReference type="GlyGen" id="Q6UX52">
    <property type="glycosylation" value="2 sites"/>
</dbReference>
<dbReference type="iPTMnet" id="Q6UX52"/>
<dbReference type="PhosphoSitePlus" id="Q6UX52"/>
<dbReference type="BioMuta" id="C17orf99"/>
<dbReference type="DMDM" id="387912830"/>
<dbReference type="PaxDb" id="9606-ENSP00000343493"/>
<dbReference type="Antibodypedia" id="32542">
    <property type="antibodies" value="23 antibodies from 11 providers"/>
</dbReference>
<dbReference type="DNASU" id="100141515"/>
<dbReference type="Ensembl" id="ENST00000340363.10">
    <property type="protein sequence ID" value="ENSP00000343493.4"/>
    <property type="gene ID" value="ENSG00000187997.12"/>
</dbReference>
<dbReference type="GeneID" id="100141515"/>
<dbReference type="KEGG" id="hsa:100141515"/>
<dbReference type="MANE-Select" id="ENST00000340363.10">
    <property type="protein sequence ID" value="ENSP00000343493.4"/>
    <property type="RefSeq nucleotide sequence ID" value="NM_001163075.2"/>
    <property type="RefSeq protein sequence ID" value="NP_001156547.1"/>
</dbReference>
<dbReference type="UCSC" id="uc002jus.5">
    <property type="organism name" value="human"/>
</dbReference>
<dbReference type="AGR" id="HGNC:34490"/>
<dbReference type="CTD" id="100141515"/>
<dbReference type="DisGeNET" id="100141515"/>
<dbReference type="GeneCards" id="C17orf99"/>
<dbReference type="HGNC" id="HGNC:34490">
    <property type="gene designation" value="C17orf99"/>
</dbReference>
<dbReference type="HPA" id="ENSG00000187997">
    <property type="expression patterns" value="Tissue enriched (bone)"/>
</dbReference>
<dbReference type="neXtProt" id="NX_Q6UX52"/>
<dbReference type="OpenTargets" id="ENSG00000187997"/>
<dbReference type="PharmGKB" id="PA162378601"/>
<dbReference type="VEuPathDB" id="HostDB:ENSG00000187997"/>
<dbReference type="eggNOG" id="ENOG502SPUE">
    <property type="taxonomic scope" value="Eukaryota"/>
</dbReference>
<dbReference type="GeneTree" id="ENSGT01120000271918"/>
<dbReference type="InParanoid" id="Q6UX52"/>
<dbReference type="OMA" id="AEMSCWA"/>
<dbReference type="OrthoDB" id="9524734at2759"/>
<dbReference type="PAN-GO" id="Q6UX52">
    <property type="GO annotations" value="4 GO annotations based on evolutionary models"/>
</dbReference>
<dbReference type="TreeFam" id="TF337680"/>
<dbReference type="PathwayCommons" id="Q6UX52"/>
<dbReference type="SignaLink" id="Q6UX52"/>
<dbReference type="BioGRID-ORCS" id="100141515">
    <property type="hits" value="10 hits in 1142 CRISPR screens"/>
</dbReference>
<dbReference type="ChiTaRS" id="C17orf99">
    <property type="organism name" value="human"/>
</dbReference>
<dbReference type="GenomeRNAi" id="100141515"/>
<dbReference type="Pharos" id="Q6UX52">
    <property type="development level" value="Tdark"/>
</dbReference>
<dbReference type="PRO" id="PR:Q6UX52"/>
<dbReference type="Proteomes" id="UP000005640">
    <property type="component" value="Chromosome 17"/>
</dbReference>
<dbReference type="RNAct" id="Q6UX52">
    <property type="molecule type" value="protein"/>
</dbReference>
<dbReference type="Bgee" id="ENSG00000187997">
    <property type="expression patterns" value="Expressed in colonic epithelium and 96 other cell types or tissues"/>
</dbReference>
<dbReference type="ExpressionAtlas" id="Q6UX52">
    <property type="expression patterns" value="baseline and differential"/>
</dbReference>
<dbReference type="GO" id="GO:0009897">
    <property type="term" value="C:external side of plasma membrane"/>
    <property type="evidence" value="ECO:0000318"/>
    <property type="project" value="GO_Central"/>
</dbReference>
<dbReference type="GO" id="GO:0005615">
    <property type="term" value="C:extracellular space"/>
    <property type="evidence" value="ECO:0000314"/>
    <property type="project" value="UniProtKB"/>
</dbReference>
<dbReference type="GO" id="GO:0005125">
    <property type="term" value="F:cytokine activity"/>
    <property type="evidence" value="ECO:0007669"/>
    <property type="project" value="UniProtKB-KW"/>
</dbReference>
<dbReference type="GO" id="GO:0004888">
    <property type="term" value="F:transmembrane signaling receptor activity"/>
    <property type="evidence" value="ECO:0000318"/>
    <property type="project" value="GO_Central"/>
</dbReference>
<dbReference type="GO" id="GO:0002250">
    <property type="term" value="P:adaptive immune response"/>
    <property type="evidence" value="ECO:0007669"/>
    <property type="project" value="UniProtKB-KW"/>
</dbReference>
<dbReference type="GO" id="GO:0007166">
    <property type="term" value="P:cell surface receptor signaling pathway"/>
    <property type="evidence" value="ECO:0000318"/>
    <property type="project" value="GO_Central"/>
</dbReference>
<dbReference type="GO" id="GO:0006955">
    <property type="term" value="P:immune response"/>
    <property type="evidence" value="ECO:0000318"/>
    <property type="project" value="GO_Central"/>
</dbReference>
<dbReference type="GO" id="GO:0002313">
    <property type="term" value="P:mature B cell differentiation involved in immune response"/>
    <property type="evidence" value="ECO:0000250"/>
    <property type="project" value="UniProtKB"/>
</dbReference>
<dbReference type="GO" id="GO:2000558">
    <property type="term" value="P:positive regulation of immunoglobulin production in mucosal tissue"/>
    <property type="evidence" value="ECO:0000250"/>
    <property type="project" value="UniProtKB"/>
</dbReference>
<dbReference type="InterPro" id="IPR040878">
    <property type="entry name" value="IL-40-like_Ig"/>
</dbReference>
<dbReference type="Pfam" id="PF17736">
    <property type="entry name" value="Ig_C17orf99"/>
    <property type="match status" value="2"/>
</dbReference>
<name>IL40_HUMAN</name>
<accession>Q6UX52</accession>
<organism>
    <name type="scientific">Homo sapiens</name>
    <name type="common">Human</name>
    <dbReference type="NCBI Taxonomy" id="9606"/>
    <lineage>
        <taxon>Eukaryota</taxon>
        <taxon>Metazoa</taxon>
        <taxon>Chordata</taxon>
        <taxon>Craniata</taxon>
        <taxon>Vertebrata</taxon>
        <taxon>Euteleostomi</taxon>
        <taxon>Mammalia</taxon>
        <taxon>Eutheria</taxon>
        <taxon>Euarchontoglires</taxon>
        <taxon>Primates</taxon>
        <taxon>Haplorrhini</taxon>
        <taxon>Catarrhini</taxon>
        <taxon>Hominidae</taxon>
        <taxon>Homo</taxon>
    </lineage>
</organism>
<comment type="function">
    <text evidence="1">Probable B cell-associated cytokine that plays a role in the regulation of humoral immune responses. Involved in lymphocyte B cell development and immunoglobulin/IgA production.</text>
</comment>
<comment type="subcellular location">
    <subcellularLocation>
        <location evidence="5">Secreted</location>
    </subcellularLocation>
</comment>
<comment type="tissue specificity">
    <text evidence="5">Expressed in fetal liver and bone marrow (PubMed:28978694). Expressed in peripheral blood lymphocyte B cells (PubMed:28978694).</text>
</comment>
<proteinExistence type="evidence at protein level"/>